<reference key="1">
    <citation type="journal article" date="2004" name="J. Bacteriol.">
        <title>Complete genome sequence of Rickettsia typhi and comparison with sequences of other Rickettsiae.</title>
        <authorList>
            <person name="McLeod M.P."/>
            <person name="Qin X."/>
            <person name="Karpathy S.E."/>
            <person name="Gioia J."/>
            <person name="Highlander S.K."/>
            <person name="Fox G.E."/>
            <person name="McNeill T.Z."/>
            <person name="Jiang H."/>
            <person name="Muzny D."/>
            <person name="Jacob L.S."/>
            <person name="Hawes A.C."/>
            <person name="Sodergren E."/>
            <person name="Gill R."/>
            <person name="Hume J."/>
            <person name="Morgan M."/>
            <person name="Fan G."/>
            <person name="Amin A.G."/>
            <person name="Gibbs R.A."/>
            <person name="Hong C."/>
            <person name="Yu X.-J."/>
            <person name="Walker D.H."/>
            <person name="Weinstock G.M."/>
        </authorList>
    </citation>
    <scope>NUCLEOTIDE SEQUENCE [LARGE SCALE GENOMIC DNA]</scope>
    <source>
        <strain>ATCC VR-144 / Wilmington</strain>
    </source>
</reference>
<protein>
    <recommendedName>
        <fullName evidence="1">GTPase Obg</fullName>
        <ecNumber evidence="1">3.6.5.-</ecNumber>
    </recommendedName>
    <alternativeName>
        <fullName evidence="1">GTP-binding protein Obg</fullName>
    </alternativeName>
</protein>
<comment type="function">
    <text evidence="1">An essential GTPase which binds GTP, GDP and possibly (p)ppGpp with moderate affinity, with high nucleotide exchange rates and a fairly low GTP hydrolysis rate. Plays a role in control of the cell cycle, stress response, ribosome biogenesis and in those bacteria that undergo differentiation, in morphogenesis control.</text>
</comment>
<comment type="cofactor">
    <cofactor evidence="1">
        <name>Mg(2+)</name>
        <dbReference type="ChEBI" id="CHEBI:18420"/>
    </cofactor>
</comment>
<comment type="subunit">
    <text evidence="1">Monomer.</text>
</comment>
<comment type="subcellular location">
    <subcellularLocation>
        <location evidence="1">Cytoplasm</location>
    </subcellularLocation>
</comment>
<comment type="similarity">
    <text evidence="1">Belongs to the TRAFAC class OBG-HflX-like GTPase superfamily. OBG GTPase family.</text>
</comment>
<name>OBG_RICTY</name>
<organism>
    <name type="scientific">Rickettsia typhi (strain ATCC VR-144 / Wilmington)</name>
    <dbReference type="NCBI Taxonomy" id="257363"/>
    <lineage>
        <taxon>Bacteria</taxon>
        <taxon>Pseudomonadati</taxon>
        <taxon>Pseudomonadota</taxon>
        <taxon>Alphaproteobacteria</taxon>
        <taxon>Rickettsiales</taxon>
        <taxon>Rickettsiaceae</taxon>
        <taxon>Rickettsieae</taxon>
        <taxon>Rickettsia</taxon>
        <taxon>typhus group</taxon>
    </lineage>
</organism>
<gene>
    <name evidence="1" type="primary">obg</name>
    <name type="ordered locus">RT0831</name>
</gene>
<keyword id="KW-0963">Cytoplasm</keyword>
<keyword id="KW-0342">GTP-binding</keyword>
<keyword id="KW-0378">Hydrolase</keyword>
<keyword id="KW-0460">Magnesium</keyword>
<keyword id="KW-0479">Metal-binding</keyword>
<keyword id="KW-0547">Nucleotide-binding</keyword>
<sequence>MHFIDEVKIYIKGGNGGNGCISFHREKFVDRGGPDGGDGGFGGSVIFRSNHHINTLVNYRYQQHFIAENGGNGKGSNRSGKSGKSLILDVPIGTQIFSEDGNILLHDFTEDEKSFEIIKGGCGGLGNSHFKTSVNQAPRKRTEGEIAQEMWIHLRLKLLSDVGLVGLPNAGKSTFLSVVTAAKPKIADYPFTTLVPNLGVVYINDEEFVIADIPGLIAGAHQGHGLGDKFLKHIERCNVLIHLIDGSSHNVIADYDTVRFELESYSDYLKNKIEIICINKCDVLTDEEIQKKIKKLQRVTNKVVHPISTYTNLGVNKIVKLALEIIKNQI</sequence>
<accession>Q68VS1</accession>
<feature type="chain" id="PRO_0000386208" description="GTPase Obg">
    <location>
        <begin position="1"/>
        <end position="330"/>
    </location>
</feature>
<feature type="domain" description="Obg" evidence="2">
    <location>
        <begin position="1"/>
        <end position="159"/>
    </location>
</feature>
<feature type="domain" description="OBG-type G" evidence="1">
    <location>
        <begin position="160"/>
        <end position="327"/>
    </location>
</feature>
<feature type="binding site" evidence="1">
    <location>
        <begin position="166"/>
        <end position="173"/>
    </location>
    <ligand>
        <name>GTP</name>
        <dbReference type="ChEBI" id="CHEBI:37565"/>
    </ligand>
</feature>
<feature type="binding site" evidence="1">
    <location>
        <position position="173"/>
    </location>
    <ligand>
        <name>Mg(2+)</name>
        <dbReference type="ChEBI" id="CHEBI:18420"/>
    </ligand>
</feature>
<feature type="binding site" evidence="1">
    <location>
        <begin position="191"/>
        <end position="195"/>
    </location>
    <ligand>
        <name>GTP</name>
        <dbReference type="ChEBI" id="CHEBI:37565"/>
    </ligand>
</feature>
<feature type="binding site" evidence="1">
    <location>
        <position position="193"/>
    </location>
    <ligand>
        <name>Mg(2+)</name>
        <dbReference type="ChEBI" id="CHEBI:18420"/>
    </ligand>
</feature>
<feature type="binding site" evidence="1">
    <location>
        <begin position="212"/>
        <end position="215"/>
    </location>
    <ligand>
        <name>GTP</name>
        <dbReference type="ChEBI" id="CHEBI:37565"/>
    </ligand>
</feature>
<feature type="binding site" evidence="1">
    <location>
        <begin position="279"/>
        <end position="282"/>
    </location>
    <ligand>
        <name>GTP</name>
        <dbReference type="ChEBI" id="CHEBI:37565"/>
    </ligand>
</feature>
<feature type="binding site" evidence="1">
    <location>
        <begin position="308"/>
        <end position="310"/>
    </location>
    <ligand>
        <name>GTP</name>
        <dbReference type="ChEBI" id="CHEBI:37565"/>
    </ligand>
</feature>
<dbReference type="EC" id="3.6.5.-" evidence="1"/>
<dbReference type="EMBL" id="AE017197">
    <property type="protein sequence ID" value="AAU04285.1"/>
    <property type="molecule type" value="Genomic_DNA"/>
</dbReference>
<dbReference type="SMR" id="Q68VS1"/>
<dbReference type="KEGG" id="rty:RT0831"/>
<dbReference type="eggNOG" id="COG0536">
    <property type="taxonomic scope" value="Bacteria"/>
</dbReference>
<dbReference type="HOGENOM" id="CLU_011747_2_3_5"/>
<dbReference type="OrthoDB" id="9807318at2"/>
<dbReference type="Proteomes" id="UP000000604">
    <property type="component" value="Chromosome"/>
</dbReference>
<dbReference type="GO" id="GO:0005737">
    <property type="term" value="C:cytoplasm"/>
    <property type="evidence" value="ECO:0007669"/>
    <property type="project" value="UniProtKB-SubCell"/>
</dbReference>
<dbReference type="GO" id="GO:0005525">
    <property type="term" value="F:GTP binding"/>
    <property type="evidence" value="ECO:0007669"/>
    <property type="project" value="UniProtKB-UniRule"/>
</dbReference>
<dbReference type="GO" id="GO:0003924">
    <property type="term" value="F:GTPase activity"/>
    <property type="evidence" value="ECO:0007669"/>
    <property type="project" value="UniProtKB-UniRule"/>
</dbReference>
<dbReference type="GO" id="GO:0000287">
    <property type="term" value="F:magnesium ion binding"/>
    <property type="evidence" value="ECO:0007669"/>
    <property type="project" value="InterPro"/>
</dbReference>
<dbReference type="GO" id="GO:0042254">
    <property type="term" value="P:ribosome biogenesis"/>
    <property type="evidence" value="ECO:0007669"/>
    <property type="project" value="UniProtKB-UniRule"/>
</dbReference>
<dbReference type="CDD" id="cd01898">
    <property type="entry name" value="Obg"/>
    <property type="match status" value="1"/>
</dbReference>
<dbReference type="FunFam" id="2.70.210.12:FF:000001">
    <property type="entry name" value="GTPase Obg"/>
    <property type="match status" value="1"/>
</dbReference>
<dbReference type="Gene3D" id="2.70.210.12">
    <property type="entry name" value="GTP1/OBG domain"/>
    <property type="match status" value="1"/>
</dbReference>
<dbReference type="Gene3D" id="3.40.50.300">
    <property type="entry name" value="P-loop containing nucleotide triphosphate hydrolases"/>
    <property type="match status" value="1"/>
</dbReference>
<dbReference type="HAMAP" id="MF_01454">
    <property type="entry name" value="GTPase_Obg"/>
    <property type="match status" value="1"/>
</dbReference>
<dbReference type="InterPro" id="IPR031167">
    <property type="entry name" value="G_OBG"/>
</dbReference>
<dbReference type="InterPro" id="IPR006073">
    <property type="entry name" value="GTP-bd"/>
</dbReference>
<dbReference type="InterPro" id="IPR014100">
    <property type="entry name" value="GTP-bd_Obg/CgtA"/>
</dbReference>
<dbReference type="InterPro" id="IPR006169">
    <property type="entry name" value="GTP1_OBG_dom"/>
</dbReference>
<dbReference type="InterPro" id="IPR036726">
    <property type="entry name" value="GTP1_OBG_dom_sf"/>
</dbReference>
<dbReference type="InterPro" id="IPR045086">
    <property type="entry name" value="OBG_GTPase"/>
</dbReference>
<dbReference type="InterPro" id="IPR027417">
    <property type="entry name" value="P-loop_NTPase"/>
</dbReference>
<dbReference type="NCBIfam" id="TIGR02729">
    <property type="entry name" value="Obg_CgtA"/>
    <property type="match status" value="1"/>
</dbReference>
<dbReference type="NCBIfam" id="NF008955">
    <property type="entry name" value="PRK12297.1"/>
    <property type="match status" value="1"/>
</dbReference>
<dbReference type="NCBIfam" id="NF008956">
    <property type="entry name" value="PRK12299.1"/>
    <property type="match status" value="1"/>
</dbReference>
<dbReference type="PANTHER" id="PTHR11702">
    <property type="entry name" value="DEVELOPMENTALLY REGULATED GTP-BINDING PROTEIN-RELATED"/>
    <property type="match status" value="1"/>
</dbReference>
<dbReference type="PANTHER" id="PTHR11702:SF31">
    <property type="entry name" value="MITOCHONDRIAL RIBOSOME-ASSOCIATED GTPASE 2"/>
    <property type="match status" value="1"/>
</dbReference>
<dbReference type="Pfam" id="PF01018">
    <property type="entry name" value="GTP1_OBG"/>
    <property type="match status" value="1"/>
</dbReference>
<dbReference type="Pfam" id="PF01926">
    <property type="entry name" value="MMR_HSR1"/>
    <property type="match status" value="1"/>
</dbReference>
<dbReference type="PIRSF" id="PIRSF002401">
    <property type="entry name" value="GTP_bd_Obg/CgtA"/>
    <property type="match status" value="1"/>
</dbReference>
<dbReference type="PRINTS" id="PR00326">
    <property type="entry name" value="GTP1OBG"/>
</dbReference>
<dbReference type="SUPFAM" id="SSF82051">
    <property type="entry name" value="Obg GTP-binding protein N-terminal domain"/>
    <property type="match status" value="1"/>
</dbReference>
<dbReference type="SUPFAM" id="SSF52540">
    <property type="entry name" value="P-loop containing nucleoside triphosphate hydrolases"/>
    <property type="match status" value="1"/>
</dbReference>
<dbReference type="PROSITE" id="PS51710">
    <property type="entry name" value="G_OBG"/>
    <property type="match status" value="1"/>
</dbReference>
<dbReference type="PROSITE" id="PS51883">
    <property type="entry name" value="OBG"/>
    <property type="match status" value="1"/>
</dbReference>
<evidence type="ECO:0000255" key="1">
    <source>
        <dbReference type="HAMAP-Rule" id="MF_01454"/>
    </source>
</evidence>
<evidence type="ECO:0000255" key="2">
    <source>
        <dbReference type="PROSITE-ProRule" id="PRU01231"/>
    </source>
</evidence>
<proteinExistence type="inferred from homology"/>